<comment type="function">
    <text evidence="1">An essential GTPase which binds GTP, GDP and possibly (p)ppGpp with moderate affinity, with high nucleotide exchange rates and a fairly low GTP hydrolysis rate. Plays a role in control of the cell cycle, stress response, ribosome biogenesis and in those bacteria that undergo differentiation, in morphogenesis control.</text>
</comment>
<comment type="cofactor">
    <cofactor evidence="1">
        <name>Mg(2+)</name>
        <dbReference type="ChEBI" id="CHEBI:18420"/>
    </cofactor>
</comment>
<comment type="subunit">
    <text evidence="1">Monomer.</text>
</comment>
<comment type="subcellular location">
    <subcellularLocation>
        <location evidence="1">Cytoplasm</location>
    </subcellularLocation>
</comment>
<comment type="similarity">
    <text evidence="1">Belongs to the TRAFAC class OBG-HflX-like GTPase superfamily. OBG GTPase family.</text>
</comment>
<proteinExistence type="inferred from homology"/>
<accession>Q4A6N4</accession>
<keyword id="KW-0963">Cytoplasm</keyword>
<keyword id="KW-0342">GTP-binding</keyword>
<keyword id="KW-0378">Hydrolase</keyword>
<keyword id="KW-0460">Magnesium</keyword>
<keyword id="KW-0479">Metal-binding</keyword>
<keyword id="KW-0547">Nucleotide-binding</keyword>
<keyword id="KW-1185">Reference proteome</keyword>
<name>OBG_MYCS5</name>
<evidence type="ECO:0000255" key="1">
    <source>
        <dbReference type="HAMAP-Rule" id="MF_01454"/>
    </source>
</evidence>
<evidence type="ECO:0000255" key="2">
    <source>
        <dbReference type="PROSITE-ProRule" id="PRU01229"/>
    </source>
</evidence>
<evidence type="ECO:0000255" key="3">
    <source>
        <dbReference type="PROSITE-ProRule" id="PRU01231"/>
    </source>
</evidence>
<feature type="chain" id="PRO_0000386077" description="GTPase Obg">
    <location>
        <begin position="1"/>
        <end position="424"/>
    </location>
</feature>
<feature type="domain" description="Obg" evidence="3">
    <location>
        <begin position="2"/>
        <end position="158"/>
    </location>
</feature>
<feature type="domain" description="OBG-type G" evidence="1">
    <location>
        <begin position="159"/>
        <end position="326"/>
    </location>
</feature>
<feature type="domain" description="OCT" evidence="2">
    <location>
        <begin position="344"/>
        <end position="422"/>
    </location>
</feature>
<feature type="binding site" evidence="1">
    <location>
        <begin position="165"/>
        <end position="172"/>
    </location>
    <ligand>
        <name>GTP</name>
        <dbReference type="ChEBI" id="CHEBI:37565"/>
    </ligand>
</feature>
<feature type="binding site" evidence="1">
    <location>
        <position position="172"/>
    </location>
    <ligand>
        <name>Mg(2+)</name>
        <dbReference type="ChEBI" id="CHEBI:18420"/>
    </ligand>
</feature>
<feature type="binding site" evidence="1">
    <location>
        <begin position="190"/>
        <end position="194"/>
    </location>
    <ligand>
        <name>GTP</name>
        <dbReference type="ChEBI" id="CHEBI:37565"/>
    </ligand>
</feature>
<feature type="binding site" evidence="1">
    <location>
        <position position="192"/>
    </location>
    <ligand>
        <name>Mg(2+)</name>
        <dbReference type="ChEBI" id="CHEBI:18420"/>
    </ligand>
</feature>
<feature type="binding site" evidence="1">
    <location>
        <begin position="211"/>
        <end position="214"/>
    </location>
    <ligand>
        <name>GTP</name>
        <dbReference type="ChEBI" id="CHEBI:37565"/>
    </ligand>
</feature>
<feature type="binding site" evidence="1">
    <location>
        <begin position="280"/>
        <end position="283"/>
    </location>
    <ligand>
        <name>GTP</name>
        <dbReference type="ChEBI" id="CHEBI:37565"/>
    </ligand>
</feature>
<feature type="binding site" evidence="1">
    <location>
        <begin position="307"/>
        <end position="309"/>
    </location>
    <ligand>
        <name>GTP</name>
        <dbReference type="ChEBI" id="CHEBI:37565"/>
    </ligand>
</feature>
<protein>
    <recommendedName>
        <fullName evidence="1">GTPase Obg</fullName>
        <ecNumber evidence="1">3.6.5.-</ecNumber>
    </recommendedName>
    <alternativeName>
        <fullName evidence="1">GTP-binding protein Obg</fullName>
    </alternativeName>
</protein>
<reference key="1">
    <citation type="journal article" date="2005" name="J. Bacteriol.">
        <title>Swine and poultry pathogens: the complete genome sequences of two strains of Mycoplasma hyopneumoniae and a strain of Mycoplasma synoviae.</title>
        <authorList>
            <person name="Vasconcelos A.T.R."/>
            <person name="Ferreira H.B."/>
            <person name="Bizarro C.V."/>
            <person name="Bonatto S.L."/>
            <person name="Carvalho M.O."/>
            <person name="Pinto P.M."/>
            <person name="Almeida D.F."/>
            <person name="Almeida L.G.P."/>
            <person name="Almeida R."/>
            <person name="Alves-Junior L."/>
            <person name="Assuncao E.N."/>
            <person name="Azevedo V.A.C."/>
            <person name="Bogo M.R."/>
            <person name="Brigido M.M."/>
            <person name="Brocchi M."/>
            <person name="Burity H.A."/>
            <person name="Camargo A.A."/>
            <person name="Camargo S.S."/>
            <person name="Carepo M.S."/>
            <person name="Carraro D.M."/>
            <person name="de Mattos Cascardo J.C."/>
            <person name="Castro L.A."/>
            <person name="Cavalcanti G."/>
            <person name="Chemale G."/>
            <person name="Collevatti R.G."/>
            <person name="Cunha C.W."/>
            <person name="Dallagiovanna B."/>
            <person name="Dambros B.P."/>
            <person name="Dellagostin O.A."/>
            <person name="Falcao C."/>
            <person name="Fantinatti-Garboggini F."/>
            <person name="Felipe M.S.S."/>
            <person name="Fiorentin L."/>
            <person name="Franco G.R."/>
            <person name="Freitas N.S.A."/>
            <person name="Frias D."/>
            <person name="Grangeiro T.B."/>
            <person name="Grisard E.C."/>
            <person name="Guimaraes C.T."/>
            <person name="Hungria M."/>
            <person name="Jardim S.N."/>
            <person name="Krieger M.A."/>
            <person name="Laurino J.P."/>
            <person name="Lima L.F.A."/>
            <person name="Lopes M.I."/>
            <person name="Loreto E.L.S."/>
            <person name="Madeira H.M.F."/>
            <person name="Manfio G.P."/>
            <person name="Maranhao A.Q."/>
            <person name="Martinkovics C.T."/>
            <person name="Medeiros S.R.B."/>
            <person name="Moreira M.A.M."/>
            <person name="Neiva M."/>
            <person name="Ramalho-Neto C.E."/>
            <person name="Nicolas M.F."/>
            <person name="Oliveira S.C."/>
            <person name="Paixao R.F.C."/>
            <person name="Pedrosa F.O."/>
            <person name="Pena S.D.J."/>
            <person name="Pereira M."/>
            <person name="Pereira-Ferrari L."/>
            <person name="Piffer I."/>
            <person name="Pinto L.S."/>
            <person name="Potrich D.P."/>
            <person name="Salim A.C.M."/>
            <person name="Santos F.R."/>
            <person name="Schmitt R."/>
            <person name="Schneider M.P.C."/>
            <person name="Schrank A."/>
            <person name="Schrank I.S."/>
            <person name="Schuck A.F."/>
            <person name="Seuanez H.N."/>
            <person name="Silva D.W."/>
            <person name="Silva R."/>
            <person name="Silva S.C."/>
            <person name="Soares C.M.A."/>
            <person name="Souza K.R.L."/>
            <person name="Souza R.C."/>
            <person name="Staats C.C."/>
            <person name="Steffens M.B.R."/>
            <person name="Teixeira S.M.R."/>
            <person name="Urmenyi T.P."/>
            <person name="Vainstein M.H."/>
            <person name="Zuccherato L.W."/>
            <person name="Simpson A.J.G."/>
            <person name="Zaha A."/>
        </authorList>
    </citation>
    <scope>NUCLEOTIDE SEQUENCE [LARGE SCALE GENOMIC DNA]</scope>
    <source>
        <strain>53</strain>
    </source>
</reference>
<gene>
    <name evidence="1" type="primary">obg</name>
    <name type="ordered locus">MS53_0168</name>
</gene>
<sequence length="424" mass="47544">MAKFIDQVKIMLKAGKGGDGMISFRREAHVDKGGPDGGDGGTGGNIYFVADLGKNTLLSFYKNKFIIAEDGVKGGPKNLYGAKGKDTIVKVPLGTLVYKNKKIVADVIKENHLYLVAKGGKGGRGNNKFKTSKNTAPRIAENGMPGEKYEANIVLKILSDVGLVGLPSCGKSTLINALSNAKAKVAEYEFTTLVPQLGLVKYYDYSYTIADLPGLIKGASLGKGLGIQFLRHIERCKVVIHIVDFGSLDKDPIQSYEAIQKELESYKLNLTQKPQLVVANKSDLANFKNNIEKFKAKYPNIEIIEISALNYHNVENLKKIIWEFLEKTSHLQIKIEDDFETEVKEINYEPDFVIQKMNQNHFKVTGKKIEELVLKIPINTFDNLMRFNNILKKIGVWEALIKRDIQKGDLVEIYQHKFEWEEEL</sequence>
<organism>
    <name type="scientific">Mycoplasmopsis synoviae (strain 53)</name>
    <name type="common">Mycoplasma synoviae</name>
    <dbReference type="NCBI Taxonomy" id="262723"/>
    <lineage>
        <taxon>Bacteria</taxon>
        <taxon>Bacillati</taxon>
        <taxon>Mycoplasmatota</taxon>
        <taxon>Mycoplasmoidales</taxon>
        <taxon>Metamycoplasmataceae</taxon>
        <taxon>Mycoplasmopsis</taxon>
    </lineage>
</organism>
<dbReference type="EC" id="3.6.5.-" evidence="1"/>
<dbReference type="EMBL" id="AE017245">
    <property type="protein sequence ID" value="AAZ43587.1"/>
    <property type="molecule type" value="Genomic_DNA"/>
</dbReference>
<dbReference type="RefSeq" id="WP_011283330.1">
    <property type="nucleotide sequence ID" value="NC_007294.1"/>
</dbReference>
<dbReference type="SMR" id="Q4A6N4"/>
<dbReference type="STRING" id="262723.MS53_0168"/>
<dbReference type="KEGG" id="msy:MS53_0168"/>
<dbReference type="eggNOG" id="COG0536">
    <property type="taxonomic scope" value="Bacteria"/>
</dbReference>
<dbReference type="HOGENOM" id="CLU_011747_2_1_14"/>
<dbReference type="OrthoDB" id="9807318at2"/>
<dbReference type="Proteomes" id="UP000000549">
    <property type="component" value="Chromosome"/>
</dbReference>
<dbReference type="GO" id="GO:0005737">
    <property type="term" value="C:cytoplasm"/>
    <property type="evidence" value="ECO:0007669"/>
    <property type="project" value="UniProtKB-SubCell"/>
</dbReference>
<dbReference type="GO" id="GO:0005525">
    <property type="term" value="F:GTP binding"/>
    <property type="evidence" value="ECO:0007669"/>
    <property type="project" value="UniProtKB-UniRule"/>
</dbReference>
<dbReference type="GO" id="GO:0003924">
    <property type="term" value="F:GTPase activity"/>
    <property type="evidence" value="ECO:0007669"/>
    <property type="project" value="UniProtKB-UniRule"/>
</dbReference>
<dbReference type="GO" id="GO:0000287">
    <property type="term" value="F:magnesium ion binding"/>
    <property type="evidence" value="ECO:0007669"/>
    <property type="project" value="InterPro"/>
</dbReference>
<dbReference type="GO" id="GO:0042254">
    <property type="term" value="P:ribosome biogenesis"/>
    <property type="evidence" value="ECO:0007669"/>
    <property type="project" value="UniProtKB-UniRule"/>
</dbReference>
<dbReference type="CDD" id="cd01898">
    <property type="entry name" value="Obg"/>
    <property type="match status" value="1"/>
</dbReference>
<dbReference type="FunFam" id="2.70.210.12:FF:000001">
    <property type="entry name" value="GTPase Obg"/>
    <property type="match status" value="1"/>
</dbReference>
<dbReference type="Gene3D" id="3.30.300.350">
    <property type="entry name" value="GTP-binding protein OBG, C-terminal domain"/>
    <property type="match status" value="1"/>
</dbReference>
<dbReference type="Gene3D" id="2.70.210.12">
    <property type="entry name" value="GTP1/OBG domain"/>
    <property type="match status" value="1"/>
</dbReference>
<dbReference type="Gene3D" id="3.40.50.300">
    <property type="entry name" value="P-loop containing nucleotide triphosphate hydrolases"/>
    <property type="match status" value="1"/>
</dbReference>
<dbReference type="HAMAP" id="MF_01454">
    <property type="entry name" value="GTPase_Obg"/>
    <property type="match status" value="1"/>
</dbReference>
<dbReference type="InterPro" id="IPR031167">
    <property type="entry name" value="G_OBG"/>
</dbReference>
<dbReference type="InterPro" id="IPR006073">
    <property type="entry name" value="GTP-bd"/>
</dbReference>
<dbReference type="InterPro" id="IPR014100">
    <property type="entry name" value="GTP-bd_Obg/CgtA"/>
</dbReference>
<dbReference type="InterPro" id="IPR036346">
    <property type="entry name" value="GTP-bd_prot_GTP1/OBG_C_sf"/>
</dbReference>
<dbReference type="InterPro" id="IPR006074">
    <property type="entry name" value="GTP1-OBG_CS"/>
</dbReference>
<dbReference type="InterPro" id="IPR006169">
    <property type="entry name" value="GTP1_OBG_dom"/>
</dbReference>
<dbReference type="InterPro" id="IPR036726">
    <property type="entry name" value="GTP1_OBG_dom_sf"/>
</dbReference>
<dbReference type="InterPro" id="IPR045086">
    <property type="entry name" value="OBG_GTPase"/>
</dbReference>
<dbReference type="InterPro" id="IPR015349">
    <property type="entry name" value="OCT_dom"/>
</dbReference>
<dbReference type="InterPro" id="IPR027417">
    <property type="entry name" value="P-loop_NTPase"/>
</dbReference>
<dbReference type="InterPro" id="IPR005225">
    <property type="entry name" value="Small_GTP-bd"/>
</dbReference>
<dbReference type="NCBIfam" id="TIGR02729">
    <property type="entry name" value="Obg_CgtA"/>
    <property type="match status" value="1"/>
</dbReference>
<dbReference type="NCBIfam" id="TIGR03595">
    <property type="entry name" value="Obg_CgtA_exten"/>
    <property type="match status" value="1"/>
</dbReference>
<dbReference type="NCBIfam" id="NF008955">
    <property type="entry name" value="PRK12297.1"/>
    <property type="match status" value="1"/>
</dbReference>
<dbReference type="NCBIfam" id="NF008956">
    <property type="entry name" value="PRK12299.1"/>
    <property type="match status" value="1"/>
</dbReference>
<dbReference type="NCBIfam" id="TIGR00231">
    <property type="entry name" value="small_GTP"/>
    <property type="match status" value="1"/>
</dbReference>
<dbReference type="PANTHER" id="PTHR11702">
    <property type="entry name" value="DEVELOPMENTALLY REGULATED GTP-BINDING PROTEIN-RELATED"/>
    <property type="match status" value="1"/>
</dbReference>
<dbReference type="PANTHER" id="PTHR11702:SF31">
    <property type="entry name" value="MITOCHONDRIAL RIBOSOME-ASSOCIATED GTPASE 2"/>
    <property type="match status" value="1"/>
</dbReference>
<dbReference type="Pfam" id="PF09269">
    <property type="entry name" value="DUF1967"/>
    <property type="match status" value="1"/>
</dbReference>
<dbReference type="Pfam" id="PF01018">
    <property type="entry name" value="GTP1_OBG"/>
    <property type="match status" value="1"/>
</dbReference>
<dbReference type="Pfam" id="PF01926">
    <property type="entry name" value="MMR_HSR1"/>
    <property type="match status" value="1"/>
</dbReference>
<dbReference type="PIRSF" id="PIRSF002401">
    <property type="entry name" value="GTP_bd_Obg/CgtA"/>
    <property type="match status" value="1"/>
</dbReference>
<dbReference type="PRINTS" id="PR00326">
    <property type="entry name" value="GTP1OBG"/>
</dbReference>
<dbReference type="SUPFAM" id="SSF102741">
    <property type="entry name" value="Obg GTP-binding protein C-terminal domain"/>
    <property type="match status" value="1"/>
</dbReference>
<dbReference type="SUPFAM" id="SSF82051">
    <property type="entry name" value="Obg GTP-binding protein N-terminal domain"/>
    <property type="match status" value="1"/>
</dbReference>
<dbReference type="SUPFAM" id="SSF52540">
    <property type="entry name" value="P-loop containing nucleoside triphosphate hydrolases"/>
    <property type="match status" value="1"/>
</dbReference>
<dbReference type="PROSITE" id="PS51710">
    <property type="entry name" value="G_OBG"/>
    <property type="match status" value="1"/>
</dbReference>
<dbReference type="PROSITE" id="PS00905">
    <property type="entry name" value="GTP1_OBG"/>
    <property type="match status" value="1"/>
</dbReference>
<dbReference type="PROSITE" id="PS51883">
    <property type="entry name" value="OBG"/>
    <property type="match status" value="1"/>
</dbReference>
<dbReference type="PROSITE" id="PS51881">
    <property type="entry name" value="OCT"/>
    <property type="match status" value="1"/>
</dbReference>